<keyword id="KW-0025">Alternative splicing</keyword>
<keyword id="KW-0963">Cytoplasm</keyword>
<keyword id="KW-0320">Glycogen biosynthesis</keyword>
<keyword id="KW-0326">Glycosidase</keyword>
<keyword id="KW-0328">Glycosyltransferase</keyword>
<keyword id="KW-0378">Hydrolase</keyword>
<keyword id="KW-0511">Multifunctional enzyme</keyword>
<keyword id="KW-0597">Phosphoprotein</keyword>
<keyword id="KW-1185">Reference proteome</keyword>
<keyword id="KW-0808">Transferase</keyword>
<keyword id="KW-0832">Ubl conjugation</keyword>
<protein>
    <recommendedName>
        <fullName evidence="1">Glycogen debranching enzyme</fullName>
    </recommendedName>
    <alternativeName>
        <fullName evidence="1">Glycogen debrancher</fullName>
    </alternativeName>
    <domain>
        <recommendedName>
            <fullName evidence="1">4-alpha-glucanotransferase</fullName>
            <ecNumber>2.4.1.25</ecNumber>
        </recommendedName>
        <alternativeName>
            <fullName evidence="1">Oligo-1,4-1,4-glucantransferase</fullName>
        </alternativeName>
    </domain>
    <domain>
        <recommendedName>
            <fullName evidence="1">Amylo-alpha-1,6-glucosidase</fullName>
            <shortName evidence="1">Amylo-1,6-glucosidase</shortName>
            <ecNumber>3.2.1.33</ecNumber>
        </recommendedName>
        <alternativeName>
            <fullName evidence="1">Dextrin 6-alpha-D-glucosidase</fullName>
        </alternativeName>
    </domain>
</protein>
<dbReference type="EC" id="2.4.1.25"/>
<dbReference type="EC" id="3.2.1.33"/>
<dbReference type="EMBL" id="EF660736">
    <property type="protein sequence ID" value="ABV45394.1"/>
    <property type="molecule type" value="Genomic_DNA"/>
</dbReference>
<dbReference type="EMBL" id="EF660736">
    <property type="protein sequence ID" value="ABV45395.1"/>
    <property type="molecule type" value="Genomic_DNA"/>
</dbReference>
<dbReference type="EMBL" id="EF660736">
    <property type="protein sequence ID" value="ABV74211.1"/>
    <property type="molecule type" value="Genomic_DNA"/>
</dbReference>
<dbReference type="EMBL" id="EF660736">
    <property type="protein sequence ID" value="ABV74212.1"/>
    <property type="molecule type" value="Genomic_DNA"/>
</dbReference>
<dbReference type="EMBL" id="EF660736">
    <property type="protein sequence ID" value="ABV74213.1"/>
    <property type="molecule type" value="Genomic_DNA"/>
</dbReference>
<dbReference type="EMBL" id="EF660737">
    <property type="protein sequence ID" value="ABV45396.1"/>
    <property type="molecule type" value="mRNA"/>
</dbReference>
<dbReference type="EMBL" id="EF660738">
    <property type="protein sequence ID" value="ABV45397.1"/>
    <property type="molecule type" value="mRNA"/>
</dbReference>
<dbReference type="EMBL" id="EF660739">
    <property type="protein sequence ID" value="ABV45398.1"/>
    <property type="molecule type" value="mRNA"/>
</dbReference>
<dbReference type="EMBL" id="EF660740">
    <property type="protein sequence ID" value="ABV45399.1"/>
    <property type="molecule type" value="mRNA"/>
</dbReference>
<dbReference type="EMBL" id="EF660741">
    <property type="protein sequence ID" value="ABV45400.1"/>
    <property type="molecule type" value="mRNA"/>
</dbReference>
<dbReference type="RefSeq" id="NP_001103778.1">
    <molecule id="A8BQB4-1"/>
    <property type="nucleotide sequence ID" value="NM_001110308.1"/>
</dbReference>
<dbReference type="SMR" id="A8BQB4"/>
<dbReference type="FunCoup" id="A8BQB4">
    <property type="interactions" value="1652"/>
</dbReference>
<dbReference type="STRING" id="9796.ENSECAP00000009911"/>
<dbReference type="CAZy" id="GH13">
    <property type="family name" value="Glycoside Hydrolase Family 13"/>
</dbReference>
<dbReference type="CAZy" id="GH133">
    <property type="family name" value="Glycoside Hydrolase Family 133"/>
</dbReference>
<dbReference type="PaxDb" id="9796-ENSECAP00000009911"/>
<dbReference type="PeptideAtlas" id="A8BQB4"/>
<dbReference type="GeneID" id="100050695"/>
<dbReference type="KEGG" id="ecb:100050695"/>
<dbReference type="CTD" id="178"/>
<dbReference type="InParanoid" id="A8BQB4"/>
<dbReference type="OrthoDB" id="10248904at2759"/>
<dbReference type="BRENDA" id="3.2.1.33">
    <property type="organism ID" value="2120"/>
</dbReference>
<dbReference type="Proteomes" id="UP000002281">
    <property type="component" value="Unplaced"/>
</dbReference>
<dbReference type="GO" id="GO:0005737">
    <property type="term" value="C:cytoplasm"/>
    <property type="evidence" value="ECO:0007669"/>
    <property type="project" value="UniProtKB-SubCell"/>
</dbReference>
<dbReference type="GO" id="GO:0004134">
    <property type="term" value="F:4-alpha-glucanotransferase activity"/>
    <property type="evidence" value="ECO:0000318"/>
    <property type="project" value="GO_Central"/>
</dbReference>
<dbReference type="GO" id="GO:0004135">
    <property type="term" value="F:amylo-alpha-1,6-glucosidase activity"/>
    <property type="evidence" value="ECO:0000318"/>
    <property type="project" value="GO_Central"/>
</dbReference>
<dbReference type="GO" id="GO:0005978">
    <property type="term" value="P:glycogen biosynthetic process"/>
    <property type="evidence" value="ECO:0007669"/>
    <property type="project" value="UniProtKB-KW"/>
</dbReference>
<dbReference type="GO" id="GO:0005980">
    <property type="term" value="P:glycogen catabolic process"/>
    <property type="evidence" value="ECO:0000318"/>
    <property type="project" value="GO_Central"/>
</dbReference>
<dbReference type="CDD" id="cd11327">
    <property type="entry name" value="AmyAc_Glg_debranch_2"/>
    <property type="match status" value="1"/>
</dbReference>
<dbReference type="FunFam" id="3.20.20.80:FF:000083">
    <property type="entry name" value="Glycogen debranching enzyme"/>
    <property type="match status" value="1"/>
</dbReference>
<dbReference type="FunFam" id="1.50.10.10:FF:000039">
    <property type="entry name" value="Glycogen debranching enzyme Gdb1, putative"/>
    <property type="match status" value="1"/>
</dbReference>
<dbReference type="FunFam" id="3.20.20.80:FF:000051">
    <property type="entry name" value="glycogen debranching enzyme isoform X2"/>
    <property type="match status" value="1"/>
</dbReference>
<dbReference type="Gene3D" id="3.20.20.80">
    <property type="entry name" value="Glycosidases"/>
    <property type="match status" value="2"/>
</dbReference>
<dbReference type="InterPro" id="IPR008928">
    <property type="entry name" value="6-hairpin_glycosidase_sf"/>
</dbReference>
<dbReference type="InterPro" id="IPR010401">
    <property type="entry name" value="AGL/Gdb1"/>
</dbReference>
<dbReference type="InterPro" id="IPR032788">
    <property type="entry name" value="AGL_central"/>
</dbReference>
<dbReference type="InterPro" id="IPR029436">
    <property type="entry name" value="AGL_euk_N"/>
</dbReference>
<dbReference type="InterPro" id="IPR032792">
    <property type="entry name" value="AGL_glucanoTrfase"/>
</dbReference>
<dbReference type="InterPro" id="IPR032790">
    <property type="entry name" value="GDE_C"/>
</dbReference>
<dbReference type="InterPro" id="IPR006421">
    <property type="entry name" value="Glycogen_debranch_met"/>
</dbReference>
<dbReference type="InterPro" id="IPR017853">
    <property type="entry name" value="Glycoside_hydrolase_SF"/>
</dbReference>
<dbReference type="NCBIfam" id="TIGR01531">
    <property type="entry name" value="glyc_debranch"/>
    <property type="match status" value="1"/>
</dbReference>
<dbReference type="PANTHER" id="PTHR10569">
    <property type="entry name" value="GLYCOGEN DEBRANCHING ENZYME"/>
    <property type="match status" value="1"/>
</dbReference>
<dbReference type="PANTHER" id="PTHR10569:SF2">
    <property type="entry name" value="GLYCOGEN DEBRANCHING ENZYME"/>
    <property type="match status" value="1"/>
</dbReference>
<dbReference type="Pfam" id="PF06202">
    <property type="entry name" value="GDE_C"/>
    <property type="match status" value="1"/>
</dbReference>
<dbReference type="Pfam" id="PF14701">
    <property type="entry name" value="hDGE_amylase"/>
    <property type="match status" value="1"/>
</dbReference>
<dbReference type="Pfam" id="PF14702">
    <property type="entry name" value="hGDE_central"/>
    <property type="match status" value="1"/>
</dbReference>
<dbReference type="Pfam" id="PF14699">
    <property type="entry name" value="hGDE_N"/>
    <property type="match status" value="1"/>
</dbReference>
<dbReference type="SUPFAM" id="SSF51445">
    <property type="entry name" value="(Trans)glycosidases"/>
    <property type="match status" value="1"/>
</dbReference>
<dbReference type="SUPFAM" id="SSF48208">
    <property type="entry name" value="Six-hairpin glycosidases"/>
    <property type="match status" value="1"/>
</dbReference>
<reference evidence="5 6" key="1">
    <citation type="journal article" date="2007" name="Gene">
        <title>Characterization of the equine glycogen debranching enzyme gene (AGL): Genomic and cDNA structure, localization, polymorphism and expression.</title>
        <authorList>
            <person name="Herszberg B."/>
            <person name="Mata X."/>
            <person name="Giulotto E."/>
            <person name="Decaunes P."/>
            <person name="Piras F.M."/>
            <person name="Chowdhary B.P."/>
            <person name="Chaffaux S."/>
            <person name="Guerin G."/>
        </authorList>
    </citation>
    <scope>NUCLEOTIDE SEQUENCE [GENOMIC DNA / MRNA] (ISOFORMS 1 AND 2)</scope>
    <scope>TISSUE SPECIFICITY</scope>
    <scope>VARIANTS THR-326 AND LEU-368</scope>
</reference>
<gene>
    <name evidence="6" type="primary">AGL</name>
</gene>
<feature type="chain" id="PRO_0000401163" description="Glycogen debranching enzyme">
    <location>
        <begin position="1"/>
        <end position="1533"/>
    </location>
</feature>
<feature type="region of interest" description="4-alpha-glucanotransferase" evidence="1">
    <location>
        <begin position="1"/>
        <end status="unknown"/>
    </location>
</feature>
<feature type="region of interest" description="Amylo-1,6-glucosidase" evidence="1">
    <location>
        <begin status="unknown"/>
        <end position="1533"/>
    </location>
</feature>
<feature type="active site" evidence="1">
    <location>
        <position position="527"/>
    </location>
</feature>
<feature type="active site" evidence="1">
    <location>
        <position position="530"/>
    </location>
</feature>
<feature type="active site" evidence="1">
    <location>
        <position position="628"/>
    </location>
</feature>
<feature type="modified residue" description="Phosphoserine" evidence="1">
    <location>
        <position position="64"/>
    </location>
</feature>
<feature type="splice variant" id="VSP_040070" description="In isoform 2." evidence="4">
    <location>
        <begin position="1"/>
        <end position="156"/>
    </location>
</feature>
<feature type="sequence variant" evidence="3">
    <original>S</original>
    <variation>T</variation>
    <location>
        <position position="326"/>
    </location>
</feature>
<feature type="sequence variant" evidence="3">
    <original>I</original>
    <variation>L</variation>
    <location>
        <position position="368"/>
    </location>
</feature>
<name>GDE_HORSE</name>
<evidence type="ECO:0000250" key="1">
    <source>
        <dbReference type="UniProtKB" id="P35573"/>
    </source>
</evidence>
<evidence type="ECO:0000255" key="2"/>
<evidence type="ECO:0000269" key="3">
    <source>
    </source>
</evidence>
<evidence type="ECO:0000303" key="4">
    <source>
    </source>
</evidence>
<evidence type="ECO:0000305" key="5"/>
<evidence type="ECO:0000312" key="6">
    <source>
        <dbReference type="EMBL" id="ABV45394.1"/>
    </source>
</evidence>
<organism>
    <name type="scientific">Equus caballus</name>
    <name type="common">Horse</name>
    <dbReference type="NCBI Taxonomy" id="9796"/>
    <lineage>
        <taxon>Eukaryota</taxon>
        <taxon>Metazoa</taxon>
        <taxon>Chordata</taxon>
        <taxon>Craniata</taxon>
        <taxon>Vertebrata</taxon>
        <taxon>Euteleostomi</taxon>
        <taxon>Mammalia</taxon>
        <taxon>Eutheria</taxon>
        <taxon>Laurasiatheria</taxon>
        <taxon>Perissodactyla</taxon>
        <taxon>Equidae</taxon>
        <taxon>Equus</taxon>
    </lineage>
</organism>
<sequence length="1533" mass="174666">MGHSKQIRTLLLNEMEKLEKTLFRLEQGFELQFRLGPTLQGKAVTVYTNYPFPGETFNREKFHSLQWENPTEREDDSDKYCKLNLQQAGSFQYYFLQGNEKSGGGYIVVDPILRVGADNHVLPLDCVTLQTFLTKCLGPFDEWESRLRVAKESGYNMIHFTPLQTLGLSRSSYSLADQLELNPDFSRPNKKYTWHDVGQLVEKLKKEWDILCITDVVYNHTAANSKWIHEHPESAYNLVNSPHLKPAWVLDRALWHLSCDVAEGKYREKGVPALIENDHQMNCIRKIIWEDIYPKIHLWEFFQVDVHKAVEQFRGLLTQENRKIISQPDPKQHLKIIQDPEYRRLGCTVDMNIALATFIPHDNGPAAIDECCNWFRKRIEELNAEKHQLVNYHQEQAVNCLLGNVFYERLAGHGPKLGPVTRKHPLVTRYFTFPFEEMTPSTEESMIHLPNKACFLMAHNGWVMGDDPLRNFAEPGSDVYLRRELICWGDSVKLRYGNKPEDCPYLWAHMKKYTEITATHFQGVRLDNCHSTPIHVAEYMLDAARKLQPNLYVVAELFTGSEDLDNIFVTRLGISSLIREAMSAADSHEEGRLVYRYGGEPVGSFVQPCLRPLMPAIAHALFMDITHDNECPIVHRSAYDALPSSTIVSMASCASGSTKGYDELVPHQISVVSEERFYTKWNPEALPSNTGEVNFQSGIIAARRAINKLHQELGAKGFIQVYVDQVDQDIVAVTRHSPSIHQSVVSVSRTAFRNPKTSFYSKEVPHMYIPGKIEEVVLEARTIERHTIPYKKDENSINGMPDITVEIREHIQLNESKIVKHAGIVTKGPNEFVQEIEFENLTPGSVIIFRVSLDPHAQVAVGILRNHLTQFSPHFKSGSLAVDNADPILKIPFASIASKLTLAELNQVLYRCESEEQEDGGGCYNIPNWSSLKYAGLQGLMSILAEIRPRNDLGHPFCDNLRSGDWMIDYVSSRLISRSGTIAEVGKWLQAMFLYLKQIPRYLIPCYFDAILIGAYTTLLDIAWKQMSSFVQNGSTFVKHLSLGSVQMCGVGKFPSLPLLSPSLTDLPYRVNEITKEKEQCCGSLAAGLPHFSAGIFRCWGRDTFIALRGLLLVTGRYLEARNIILAFAGTLRHGLIPNLLGEGTHARYNCRDAVWWWLQCIQDYCKIVPNGLDILRCPVSRMYPTDDSVPLSAGTVDQPLFEVIQEAMQRHVQGIQFRERNAGPQIDRNMKDEGFNITAGVDEETGFVYGGNRFNCGTWMDKMGESDRARNRGIPATPRDGSAVEIVGLSKSAVRWLLELSRKNIFPYHEVRVKRHGKFVTVSYDEWNRKIQDNFEKLFHVSEDPSDFNEKHPELVHKRGIYKDSYGASSPWCDYQLRPNFTIAMVVAPELFTPEKAWKALEIAEKKLLGPLGMKTLDPDDMVYCGIYDNALDNDNYNLAKGFNYHQGPEWLWPTGYFLRAKLYFSKLMGPETNAKTMFLVKNVLSRHYVHLERSPWKGLPELTNENGQYCPFSCETQAWSIATVLETLYDL</sequence>
<accession>A8BQB4</accession>
<accession>A8BQB7</accession>
<proteinExistence type="evidence at transcript level"/>
<comment type="function">
    <text evidence="1">Multifunctional enzyme acting as 1,4-alpha-D-glucan:1,4-alpha-D-glucan 4-alpha-D-glycosyltransferase and amylo-1,6-glucosidase in glycogen degradation.</text>
</comment>
<comment type="catalytic activity">
    <reaction evidence="1">
        <text>Transfers a segment of a (1-&gt;4)-alpha-D-glucan to a new position in an acceptor, which may be glucose or a (1-&gt;4)-alpha-D-glucan.</text>
        <dbReference type="EC" id="2.4.1.25"/>
    </reaction>
</comment>
<comment type="catalytic activity">
    <reaction evidence="1">
        <text>Hydrolysis of (1-&gt;6)-alpha-D-glucosidic branch linkages in glycogen phosphorylase limit dextrin.</text>
        <dbReference type="EC" id="3.2.1.33"/>
    </reaction>
</comment>
<comment type="subunit">
    <text evidence="1">Monomer. Interacts with NHLRC1/malin (By similarity).</text>
</comment>
<comment type="subcellular location">
    <subcellularLocation>
        <location evidence="1">Cytoplasm</location>
    </subcellularLocation>
    <text evidence="1">Under glycogenolytic conditions localizes to the nucleus.</text>
</comment>
<comment type="alternative products">
    <event type="alternative splicing"/>
    <isoform>
        <id>A8BQB4-1</id>
        <name evidence="3">1</name>
        <sequence type="displayed"/>
    </isoform>
    <isoform>
        <id>A8BQB4-2</id>
        <name evidence="3">2</name>
        <sequence type="described" ref="VSP_040070"/>
    </isoform>
</comment>
<comment type="tissue specificity">
    <text evidence="3">Ubiquitous. Expressed in striated skeletal muscle, heart, liver, spleen, skin, spinal cord, lung, kidney and testicle.</text>
</comment>
<comment type="PTM">
    <text evidence="1">Ubiquitinated.</text>
</comment>
<comment type="similarity">
    <text evidence="2">Belongs to the glycogen debranching enzyme family.</text>
</comment>